<reference key="1">
    <citation type="journal article" date="1999" name="DNA Res.">
        <title>Complete structure of the chloroplast genome of Arabidopsis thaliana.</title>
        <authorList>
            <person name="Sato S."/>
            <person name="Nakamura Y."/>
            <person name="Kaneko T."/>
            <person name="Asamizu E."/>
            <person name="Tabata S."/>
        </authorList>
    </citation>
    <scope>NUCLEOTIDE SEQUENCE [LARGE SCALE GENOMIC DNA]</scope>
    <source>
        <strain>cv. Columbia</strain>
    </source>
</reference>
<reference key="2">
    <citation type="submission" date="2000-02" db="EMBL/GenBank/DDBJ databases">
        <title>Long branches in the seed plants and the root of the angiosperms.</title>
        <authorList>
            <person name="Graham S.W."/>
            <person name="Reeves P.A."/>
            <person name="Burns A."/>
            <person name="Olmstead R.G."/>
        </authorList>
    </citation>
    <scope>NUCLEOTIDE SEQUENCE [GENOMIC DNA]</scope>
</reference>
<keyword id="KW-0002">3D-structure</keyword>
<keyword id="KW-0150">Chloroplast</keyword>
<keyword id="KW-0472">Membrane</keyword>
<keyword id="KW-0602">Photosynthesis</keyword>
<keyword id="KW-0604">Photosystem II</keyword>
<keyword id="KW-0934">Plastid</keyword>
<keyword id="KW-0674">Reaction center</keyword>
<keyword id="KW-1185">Reference proteome</keyword>
<keyword id="KW-0793">Thylakoid</keyword>
<keyword id="KW-0812">Transmembrane</keyword>
<keyword id="KW-1133">Transmembrane helix</keyword>
<accession>P60129</accession>
<accession>P29301</accession>
<evidence type="ECO:0000255" key="1">
    <source>
        <dbReference type="HAMAP-Rule" id="MF_01317"/>
    </source>
</evidence>
<evidence type="ECO:0007829" key="2">
    <source>
        <dbReference type="PDB" id="7OUI"/>
    </source>
</evidence>
<sequence length="38" mass="4470">MTQSNPNEQSVELNRTSLYWGLLLIFVLAVLFSNYFFN</sequence>
<comment type="function">
    <text evidence="1">One of the components of the core complex of photosystem II (PSII). PSII is a light-driven water:plastoquinone oxidoreductase that uses light energy to abstract electrons from H(2)O, generating O(2) and a proton gradient subsequently used for ATP formation. It consists of a core antenna complex that captures photons, and an electron transfer chain that converts photonic excitation into a charge separation. This subunit is found at the monomer-monomer interface and is required for correct PSII assembly and/or dimerization.</text>
</comment>
<comment type="subunit">
    <text evidence="1">PSII is composed of 1 copy each of membrane proteins PsbA, PsbB, PsbC, PsbD, PsbE, PsbF, PsbH, PsbI, PsbJ, PsbK, PsbL, PsbM, PsbT, PsbX, PsbY, PsbZ, Psb30/Ycf12, at least 3 peripheral proteins of the oxygen-evolving complex and a large number of cofactors. It forms dimeric complexes.</text>
</comment>
<comment type="subcellular location">
    <subcellularLocation>
        <location evidence="1">Plastid</location>
        <location evidence="1">Chloroplast thylakoid membrane</location>
        <topology evidence="1">Single-pass membrane protein</topology>
    </subcellularLocation>
</comment>
<comment type="similarity">
    <text evidence="1">Belongs to the PsbL family.</text>
</comment>
<gene>
    <name evidence="1" type="primary">psbL</name>
    <name type="ordered locus">AtCg00560</name>
</gene>
<feature type="chain" id="PRO_0000219679" description="Photosystem II reaction center protein L">
    <location>
        <begin position="1"/>
        <end position="38"/>
    </location>
</feature>
<feature type="transmembrane region" description="Helical" evidence="1">
    <location>
        <begin position="17"/>
        <end position="37"/>
    </location>
</feature>
<feature type="strand" evidence="2">
    <location>
        <begin position="5"/>
        <end position="7"/>
    </location>
</feature>
<feature type="helix" evidence="2">
    <location>
        <begin position="15"/>
        <end position="37"/>
    </location>
</feature>
<geneLocation type="chloroplast"/>
<protein>
    <recommendedName>
        <fullName evidence="1">Photosystem II reaction center protein L</fullName>
        <shortName evidence="1">PSII-L</shortName>
    </recommendedName>
</protein>
<proteinExistence type="evidence at protein level"/>
<organism>
    <name type="scientific">Arabidopsis thaliana</name>
    <name type="common">Mouse-ear cress</name>
    <dbReference type="NCBI Taxonomy" id="3702"/>
    <lineage>
        <taxon>Eukaryota</taxon>
        <taxon>Viridiplantae</taxon>
        <taxon>Streptophyta</taxon>
        <taxon>Embryophyta</taxon>
        <taxon>Tracheophyta</taxon>
        <taxon>Spermatophyta</taxon>
        <taxon>Magnoliopsida</taxon>
        <taxon>eudicotyledons</taxon>
        <taxon>Gunneridae</taxon>
        <taxon>Pentapetalae</taxon>
        <taxon>rosids</taxon>
        <taxon>malvids</taxon>
        <taxon>Brassicales</taxon>
        <taxon>Brassicaceae</taxon>
        <taxon>Camelineae</taxon>
        <taxon>Arabidopsis</taxon>
    </lineage>
</organism>
<dbReference type="EMBL" id="AP000423">
    <property type="protein sequence ID" value="BAA84400.1"/>
    <property type="molecule type" value="Genomic_DNA"/>
</dbReference>
<dbReference type="EMBL" id="AY007473">
    <property type="protein sequence ID" value="AAG26976.1"/>
    <property type="molecule type" value="Genomic_DNA"/>
</dbReference>
<dbReference type="RefSeq" id="NP_051074.1">
    <property type="nucleotide sequence ID" value="NC_000932.1"/>
</dbReference>
<dbReference type="PDB" id="5MDX">
    <property type="method" value="EM"/>
    <property type="resolution" value="5.30 A"/>
    <property type="chains" value="L/l=1-38"/>
</dbReference>
<dbReference type="PDB" id="7OUI">
    <property type="method" value="EM"/>
    <property type="resolution" value="2.79 A"/>
    <property type="chains" value="L/l=1-38"/>
</dbReference>
<dbReference type="PDBsum" id="5MDX"/>
<dbReference type="PDBsum" id="7OUI"/>
<dbReference type="EMDB" id="EMD-13078"/>
<dbReference type="EMDB" id="EMD-3491"/>
<dbReference type="SMR" id="P60129"/>
<dbReference type="FunCoup" id="P60129">
    <property type="interactions" value="77"/>
</dbReference>
<dbReference type="IntAct" id="P60129">
    <property type="interactions" value="2"/>
</dbReference>
<dbReference type="MINT" id="P60129"/>
<dbReference type="STRING" id="3702.P60129"/>
<dbReference type="TCDB" id="3.E.2.2.3">
    <property type="family name" value="the photosynthetic reaction center (prc) family"/>
</dbReference>
<dbReference type="iPTMnet" id="P60129"/>
<dbReference type="PaxDb" id="3702-ATCG00560.1"/>
<dbReference type="ProteomicsDB" id="226170"/>
<dbReference type="EnsemblPlants" id="ATCG00560.1">
    <property type="protein sequence ID" value="ATCG00560.1"/>
    <property type="gene ID" value="ATCG00560"/>
</dbReference>
<dbReference type="GeneID" id="844751"/>
<dbReference type="Gramene" id="ATCG00560.1">
    <property type="protein sequence ID" value="ATCG00560.1"/>
    <property type="gene ID" value="ATCG00560"/>
</dbReference>
<dbReference type="KEGG" id="ath:ArthCp037"/>
<dbReference type="Araport" id="ATCG00560"/>
<dbReference type="TAIR" id="ATCG00560">
    <property type="gene designation" value="PSBL"/>
</dbReference>
<dbReference type="eggNOG" id="ENOG502SFCU">
    <property type="taxonomic scope" value="Eukaryota"/>
</dbReference>
<dbReference type="HOGENOM" id="CLU_214425_0_0_1"/>
<dbReference type="InParanoid" id="P60129"/>
<dbReference type="PRO" id="PR:P60129"/>
<dbReference type="Proteomes" id="UP000006548">
    <property type="component" value="Chloroplast Pltd"/>
</dbReference>
<dbReference type="ExpressionAtlas" id="P60129">
    <property type="expression patterns" value="baseline and differential"/>
</dbReference>
<dbReference type="GO" id="GO:0009534">
    <property type="term" value="C:chloroplast thylakoid"/>
    <property type="evidence" value="ECO:0007005"/>
    <property type="project" value="TAIR"/>
</dbReference>
<dbReference type="GO" id="GO:0009535">
    <property type="term" value="C:chloroplast thylakoid membrane"/>
    <property type="evidence" value="ECO:0007005"/>
    <property type="project" value="TAIR"/>
</dbReference>
<dbReference type="GO" id="GO:0009539">
    <property type="term" value="C:photosystem II reaction center"/>
    <property type="evidence" value="ECO:0007669"/>
    <property type="project" value="InterPro"/>
</dbReference>
<dbReference type="GO" id="GO:0009579">
    <property type="term" value="C:thylakoid"/>
    <property type="evidence" value="ECO:0007005"/>
    <property type="project" value="TAIR"/>
</dbReference>
<dbReference type="GO" id="GO:0015979">
    <property type="term" value="P:photosynthesis"/>
    <property type="evidence" value="ECO:0007669"/>
    <property type="project" value="UniProtKB-UniRule"/>
</dbReference>
<dbReference type="HAMAP" id="MF_01317">
    <property type="entry name" value="PSII_PsbL"/>
    <property type="match status" value="1"/>
</dbReference>
<dbReference type="InterPro" id="IPR003372">
    <property type="entry name" value="PSII_PsbL"/>
</dbReference>
<dbReference type="InterPro" id="IPR037266">
    <property type="entry name" value="PSII_PsbL_sf"/>
</dbReference>
<dbReference type="NCBIfam" id="NF001972">
    <property type="entry name" value="PRK00753.1"/>
    <property type="match status" value="1"/>
</dbReference>
<dbReference type="Pfam" id="PF02419">
    <property type="entry name" value="PsbL"/>
    <property type="match status" value="1"/>
</dbReference>
<dbReference type="SUPFAM" id="SSF161017">
    <property type="entry name" value="Photosystem II reaction center protein L, PsbL"/>
    <property type="match status" value="1"/>
</dbReference>
<name>PSBL_ARATH</name>